<geneLocation type="chloroplast"/>
<accession>P12189</accession>
<protein>
    <recommendedName>
        <fullName evidence="1">Photosystem II reaction center protein J</fullName>
        <shortName evidence="1">PSII-J</shortName>
    </recommendedName>
</protein>
<organism>
    <name type="scientific">Oryza sativa subsp. japonica</name>
    <name type="common">Rice</name>
    <dbReference type="NCBI Taxonomy" id="39947"/>
    <lineage>
        <taxon>Eukaryota</taxon>
        <taxon>Viridiplantae</taxon>
        <taxon>Streptophyta</taxon>
        <taxon>Embryophyta</taxon>
        <taxon>Tracheophyta</taxon>
        <taxon>Spermatophyta</taxon>
        <taxon>Magnoliopsida</taxon>
        <taxon>Liliopsida</taxon>
        <taxon>Poales</taxon>
        <taxon>Poaceae</taxon>
        <taxon>BOP clade</taxon>
        <taxon>Oryzoideae</taxon>
        <taxon>Oryzeae</taxon>
        <taxon>Oryzinae</taxon>
        <taxon>Oryza</taxon>
        <taxon>Oryza sativa</taxon>
    </lineage>
</organism>
<sequence>MADTTGRIPLWLIGTVTGIAVIGLIGVFFYGSYSGLGSSL</sequence>
<gene>
    <name evidence="1" type="primary">psbJ</name>
    <name type="ordered locus">LOC_Osp1g00490</name>
</gene>
<evidence type="ECO:0000255" key="1">
    <source>
        <dbReference type="HAMAP-Rule" id="MF_01305"/>
    </source>
</evidence>
<feature type="chain" id="PRO_0000216607" description="Photosystem II reaction center protein J">
    <location>
        <begin position="1"/>
        <end position="40"/>
    </location>
</feature>
<feature type="transmembrane region" description="Helical" evidence="1">
    <location>
        <begin position="8"/>
        <end position="28"/>
    </location>
</feature>
<name>PSBJ_ORYSJ</name>
<proteinExistence type="inferred from homology"/>
<dbReference type="EMBL" id="X15901">
    <property type="protein sequence ID" value="CAA33962.1"/>
    <property type="molecule type" value="Genomic_DNA"/>
</dbReference>
<dbReference type="EMBL" id="AY522330">
    <property type="status" value="NOT_ANNOTATED_CDS"/>
    <property type="molecule type" value="Genomic_DNA"/>
</dbReference>
<dbReference type="PIR" id="JQ0240">
    <property type="entry name" value="F2RZJ"/>
</dbReference>
<dbReference type="RefSeq" id="NP_039400.1">
    <property type="nucleotide sequence ID" value="NC_001320.1"/>
</dbReference>
<dbReference type="SMR" id="P12189"/>
<dbReference type="FunCoup" id="P12189">
    <property type="interactions" value="66"/>
</dbReference>
<dbReference type="STRING" id="39947.P12189"/>
<dbReference type="PaxDb" id="39947-P12189"/>
<dbReference type="GeneID" id="3131471"/>
<dbReference type="KEGG" id="dosa:CAA33962.1"/>
<dbReference type="KEGG" id="osa:3131471"/>
<dbReference type="InParanoid" id="P12189"/>
<dbReference type="Proteomes" id="UP000059680">
    <property type="component" value="Chloroplast"/>
</dbReference>
<dbReference type="GO" id="GO:0009535">
    <property type="term" value="C:chloroplast thylakoid membrane"/>
    <property type="evidence" value="ECO:0007669"/>
    <property type="project" value="UniProtKB-SubCell"/>
</dbReference>
<dbReference type="GO" id="GO:0009523">
    <property type="term" value="C:photosystem II"/>
    <property type="evidence" value="ECO:0000318"/>
    <property type="project" value="GO_Central"/>
</dbReference>
<dbReference type="GO" id="GO:0009539">
    <property type="term" value="C:photosystem II reaction center"/>
    <property type="evidence" value="ECO:0007669"/>
    <property type="project" value="InterPro"/>
</dbReference>
<dbReference type="GO" id="GO:0009536">
    <property type="term" value="C:plastid"/>
    <property type="evidence" value="ECO:0000250"/>
    <property type="project" value="Gramene"/>
</dbReference>
<dbReference type="GO" id="GO:0015979">
    <property type="term" value="P:photosynthesis"/>
    <property type="evidence" value="ECO:0007669"/>
    <property type="project" value="UniProtKB-UniRule"/>
</dbReference>
<dbReference type="Gene3D" id="6.10.250.2070">
    <property type="match status" value="1"/>
</dbReference>
<dbReference type="HAMAP" id="MF_01305">
    <property type="entry name" value="PSII_PsbJ"/>
    <property type="match status" value="1"/>
</dbReference>
<dbReference type="InterPro" id="IPR002682">
    <property type="entry name" value="PSII_PsbJ"/>
</dbReference>
<dbReference type="InterPro" id="IPR037267">
    <property type="entry name" value="PSII_PsbJ_sf"/>
</dbReference>
<dbReference type="NCBIfam" id="NF002722">
    <property type="entry name" value="PRK02565.1"/>
    <property type="match status" value="1"/>
</dbReference>
<dbReference type="PANTHER" id="PTHR34812">
    <property type="entry name" value="PHOTOSYSTEM II REACTION CENTER PROTEIN J"/>
    <property type="match status" value="1"/>
</dbReference>
<dbReference type="PANTHER" id="PTHR34812:SF3">
    <property type="entry name" value="PHOTOSYSTEM II REACTION CENTER PROTEIN J"/>
    <property type="match status" value="1"/>
</dbReference>
<dbReference type="Pfam" id="PF01788">
    <property type="entry name" value="PsbJ"/>
    <property type="match status" value="1"/>
</dbReference>
<dbReference type="SUPFAM" id="SSF161021">
    <property type="entry name" value="Photosystem II reaction center protein J, PsbJ"/>
    <property type="match status" value="1"/>
</dbReference>
<reference key="1">
    <citation type="journal article" date="1989" name="Mol. Gen. Genet.">
        <title>The complete sequence of the rice (Oryza sativa) chloroplast genome: intermolecular recombination between distinct tRNA genes accounts for a major plastid DNA inversion during the evolution of the cereals.</title>
        <authorList>
            <person name="Hiratsuka J."/>
            <person name="Shimada H."/>
            <person name="Whittier R."/>
            <person name="Ishibashi T."/>
            <person name="Sakamoto M."/>
            <person name="Mori M."/>
            <person name="Kondo C."/>
            <person name="Honji Y."/>
            <person name="Sun C.-R."/>
            <person name="Meng B.-Y."/>
            <person name="Li Y.-Q."/>
            <person name="Kanno A."/>
            <person name="Nishizawa Y."/>
            <person name="Hirai A."/>
            <person name="Shinozaki K."/>
            <person name="Sugiura M."/>
        </authorList>
    </citation>
    <scope>NUCLEOTIDE SEQUENCE [LARGE SCALE GENOMIC DNA]</scope>
    <source>
        <strain>cv. Nipponbare</strain>
    </source>
</reference>
<reference key="2">
    <citation type="journal article" date="2004" name="Plant Physiol.">
        <title>A comparison of rice chloroplast genomes.</title>
        <authorList>
            <person name="Tang J."/>
            <person name="Xia H."/>
            <person name="Cao M."/>
            <person name="Zhang X."/>
            <person name="Zeng W."/>
            <person name="Hu S."/>
            <person name="Tong W."/>
            <person name="Wang J."/>
            <person name="Wang J."/>
            <person name="Yu J."/>
            <person name="Yang H."/>
            <person name="Zhu L."/>
        </authorList>
    </citation>
    <scope>NUCLEOTIDE SEQUENCE [LARGE SCALE GENOMIC DNA]</scope>
    <source>
        <strain>cv. Nipponbare</strain>
    </source>
</reference>
<keyword id="KW-0150">Chloroplast</keyword>
<keyword id="KW-0472">Membrane</keyword>
<keyword id="KW-0602">Photosynthesis</keyword>
<keyword id="KW-0604">Photosystem II</keyword>
<keyword id="KW-0934">Plastid</keyword>
<keyword id="KW-0674">Reaction center</keyword>
<keyword id="KW-1185">Reference proteome</keyword>
<keyword id="KW-0793">Thylakoid</keyword>
<keyword id="KW-0812">Transmembrane</keyword>
<keyword id="KW-1133">Transmembrane helix</keyword>
<comment type="function">
    <text evidence="1">One of the components of the core complex of photosystem II (PSII). PSII is a light-driven water:plastoquinone oxidoreductase that uses light energy to abstract electrons from H(2)O, generating O(2) and a proton gradient subsequently used for ATP formation. It consists of a core antenna complex that captures photons, and an electron transfer chain that converts photonic excitation into a charge separation.</text>
</comment>
<comment type="subunit">
    <text evidence="1">PSII is composed of 1 copy each of membrane proteins PsbA, PsbB, PsbC, PsbD, PsbE, PsbF, PsbH, PsbI, PsbJ, PsbK, PsbL, PsbM, PsbT, PsbX, PsbY, PsbZ, Psb30/Ycf12, at least 3 peripheral proteins of the oxygen-evolving complex and a large number of cofactors. It forms dimeric complexes.</text>
</comment>
<comment type="subcellular location">
    <subcellularLocation>
        <location evidence="1">Plastid</location>
        <location evidence="1">Chloroplast thylakoid membrane</location>
        <topology evidence="1">Single-pass membrane protein</topology>
    </subcellularLocation>
</comment>
<comment type="similarity">
    <text evidence="1">Belongs to the PsbJ family.</text>
</comment>